<keyword id="KW-0067">ATP-binding</keyword>
<keyword id="KW-0143">Chaperone</keyword>
<keyword id="KW-0963">Cytoplasm</keyword>
<keyword id="KW-0547">Nucleotide-binding</keyword>
<keyword id="KW-0346">Stress response</keyword>
<protein>
    <recommendedName>
        <fullName evidence="1">ATP-dependent protease ATPase subunit HslU</fullName>
    </recommendedName>
    <alternativeName>
        <fullName evidence="1">Unfoldase HslU</fullName>
    </alternativeName>
</protein>
<reference key="1">
    <citation type="journal article" date="2010" name="Genome Biol. Evol.">
        <title>Continuing evolution of Burkholderia mallei through genome reduction and large-scale rearrangements.</title>
        <authorList>
            <person name="Losada L."/>
            <person name="Ronning C.M."/>
            <person name="DeShazer D."/>
            <person name="Woods D."/>
            <person name="Fedorova N."/>
            <person name="Kim H.S."/>
            <person name="Shabalina S.A."/>
            <person name="Pearson T.R."/>
            <person name="Brinkac L."/>
            <person name="Tan P."/>
            <person name="Nandi T."/>
            <person name="Crabtree J."/>
            <person name="Badger J."/>
            <person name="Beckstrom-Sternberg S."/>
            <person name="Saqib M."/>
            <person name="Schutzer S.E."/>
            <person name="Keim P."/>
            <person name="Nierman W.C."/>
        </authorList>
    </citation>
    <scope>NUCLEOTIDE SEQUENCE [LARGE SCALE GENOMIC DNA]</scope>
    <source>
        <strain>1106a</strain>
    </source>
</reference>
<evidence type="ECO:0000255" key="1">
    <source>
        <dbReference type="HAMAP-Rule" id="MF_00249"/>
    </source>
</evidence>
<accession>A3NQ62</accession>
<comment type="function">
    <text evidence="1">ATPase subunit of a proteasome-like degradation complex; this subunit has chaperone activity. The binding of ATP and its subsequent hydrolysis by HslU are essential for unfolding of protein substrates subsequently hydrolyzed by HslV. HslU recognizes the N-terminal part of its protein substrates and unfolds these before they are guided to HslV for hydrolysis.</text>
</comment>
<comment type="subunit">
    <text evidence="1">A double ring-shaped homohexamer of HslV is capped on each side by a ring-shaped HslU homohexamer. The assembly of the HslU/HslV complex is dependent on binding of ATP.</text>
</comment>
<comment type="subcellular location">
    <subcellularLocation>
        <location evidence="1">Cytoplasm</location>
    </subcellularLocation>
</comment>
<comment type="similarity">
    <text evidence="1">Belongs to the ClpX chaperone family. HslU subfamily.</text>
</comment>
<name>HSLU_BURP0</name>
<organism>
    <name type="scientific">Burkholderia pseudomallei (strain 1106a)</name>
    <dbReference type="NCBI Taxonomy" id="357348"/>
    <lineage>
        <taxon>Bacteria</taxon>
        <taxon>Pseudomonadati</taxon>
        <taxon>Pseudomonadota</taxon>
        <taxon>Betaproteobacteria</taxon>
        <taxon>Burkholderiales</taxon>
        <taxon>Burkholderiaceae</taxon>
        <taxon>Burkholderia</taxon>
        <taxon>pseudomallei group</taxon>
    </lineage>
</organism>
<proteinExistence type="inferred from homology"/>
<sequence>MSTMTPAEIVSELDKHIIGQAKAKKAVAVALRNRWRRQQVAEPLRQEITPKNILMIGPTGVGKTEIARRLAKLADAPFIKIEATKFTEVGYVGRDVDSIVRDLIEISVKQTRETEMRKVRSKATDLAEDRILDVLLPQPRAVGFGASAEHANDDNNATRQTFRKRLREGQLDDKEIELDIEQPAVGMDIMAPPGMEEMTEQIRSMFSNLGSGKKQRRKVKIREALKLLTDEEAAKMLNDEEVKTKAVQNVEQNGIVFLDEIDKITSRNHEGGGGEVSRQGVQRDLLPLVEGTTINTKYGMVKTDHILFIASGAFHLAKPSDLIPELQGRFPIRVELDSLSVKDFEAILVATDASLVKQYQALLATEDVKLEFADDGIRRLAEIAYAVNEKTENIGARRLYTVIEKLLEEVSFAAGNHAGQSVTIDSAYVDRALGEVSKDEDLSRYVL</sequence>
<feature type="chain" id="PRO_1000012717" description="ATP-dependent protease ATPase subunit HslU">
    <location>
        <begin position="1"/>
        <end position="447"/>
    </location>
</feature>
<feature type="binding site" evidence="1">
    <location>
        <position position="18"/>
    </location>
    <ligand>
        <name>ATP</name>
        <dbReference type="ChEBI" id="CHEBI:30616"/>
    </ligand>
</feature>
<feature type="binding site" evidence="1">
    <location>
        <begin position="60"/>
        <end position="65"/>
    </location>
    <ligand>
        <name>ATP</name>
        <dbReference type="ChEBI" id="CHEBI:30616"/>
    </ligand>
</feature>
<feature type="binding site" evidence="1">
    <location>
        <position position="259"/>
    </location>
    <ligand>
        <name>ATP</name>
        <dbReference type="ChEBI" id="CHEBI:30616"/>
    </ligand>
</feature>
<feature type="binding site" evidence="1">
    <location>
        <position position="325"/>
    </location>
    <ligand>
        <name>ATP</name>
        <dbReference type="ChEBI" id="CHEBI:30616"/>
    </ligand>
</feature>
<feature type="binding site" evidence="1">
    <location>
        <position position="397"/>
    </location>
    <ligand>
        <name>ATP</name>
        <dbReference type="ChEBI" id="CHEBI:30616"/>
    </ligand>
</feature>
<dbReference type="EMBL" id="CP000572">
    <property type="protein sequence ID" value="ABN89289.1"/>
    <property type="molecule type" value="Genomic_DNA"/>
</dbReference>
<dbReference type="RefSeq" id="WP_004198316.1">
    <property type="nucleotide sequence ID" value="NC_009076.1"/>
</dbReference>
<dbReference type="SMR" id="A3NQ62"/>
<dbReference type="GeneID" id="93058712"/>
<dbReference type="KEGG" id="bpl:BURPS1106A_0200"/>
<dbReference type="HOGENOM" id="CLU_033123_0_0_4"/>
<dbReference type="Proteomes" id="UP000006738">
    <property type="component" value="Chromosome I"/>
</dbReference>
<dbReference type="GO" id="GO:0009376">
    <property type="term" value="C:HslUV protease complex"/>
    <property type="evidence" value="ECO:0007669"/>
    <property type="project" value="UniProtKB-UniRule"/>
</dbReference>
<dbReference type="GO" id="GO:0005524">
    <property type="term" value="F:ATP binding"/>
    <property type="evidence" value="ECO:0007669"/>
    <property type="project" value="UniProtKB-UniRule"/>
</dbReference>
<dbReference type="GO" id="GO:0016887">
    <property type="term" value="F:ATP hydrolysis activity"/>
    <property type="evidence" value="ECO:0007669"/>
    <property type="project" value="InterPro"/>
</dbReference>
<dbReference type="GO" id="GO:0008233">
    <property type="term" value="F:peptidase activity"/>
    <property type="evidence" value="ECO:0007669"/>
    <property type="project" value="InterPro"/>
</dbReference>
<dbReference type="GO" id="GO:0036402">
    <property type="term" value="F:proteasome-activating activity"/>
    <property type="evidence" value="ECO:0007669"/>
    <property type="project" value="UniProtKB-UniRule"/>
</dbReference>
<dbReference type="GO" id="GO:0043335">
    <property type="term" value="P:protein unfolding"/>
    <property type="evidence" value="ECO:0007669"/>
    <property type="project" value="UniProtKB-UniRule"/>
</dbReference>
<dbReference type="GO" id="GO:0051603">
    <property type="term" value="P:proteolysis involved in protein catabolic process"/>
    <property type="evidence" value="ECO:0007669"/>
    <property type="project" value="TreeGrafter"/>
</dbReference>
<dbReference type="CDD" id="cd19498">
    <property type="entry name" value="RecA-like_HslU"/>
    <property type="match status" value="1"/>
</dbReference>
<dbReference type="FunFam" id="3.40.50.300:FF:000213">
    <property type="entry name" value="ATP-dependent protease ATPase subunit HslU"/>
    <property type="match status" value="1"/>
</dbReference>
<dbReference type="FunFam" id="3.40.50.300:FF:000220">
    <property type="entry name" value="ATP-dependent protease ATPase subunit HslU"/>
    <property type="match status" value="1"/>
</dbReference>
<dbReference type="Gene3D" id="1.10.8.60">
    <property type="match status" value="1"/>
</dbReference>
<dbReference type="Gene3D" id="1.10.8.10">
    <property type="entry name" value="DNA helicase RuvA subunit, C-terminal domain"/>
    <property type="match status" value="2"/>
</dbReference>
<dbReference type="Gene3D" id="3.40.50.300">
    <property type="entry name" value="P-loop containing nucleotide triphosphate hydrolases"/>
    <property type="match status" value="2"/>
</dbReference>
<dbReference type="HAMAP" id="MF_00249">
    <property type="entry name" value="HslU"/>
    <property type="match status" value="1"/>
</dbReference>
<dbReference type="InterPro" id="IPR003593">
    <property type="entry name" value="AAA+_ATPase"/>
</dbReference>
<dbReference type="InterPro" id="IPR050052">
    <property type="entry name" value="ATP-dep_Clp_protease_ClpX"/>
</dbReference>
<dbReference type="InterPro" id="IPR003959">
    <property type="entry name" value="ATPase_AAA_core"/>
</dbReference>
<dbReference type="InterPro" id="IPR019489">
    <property type="entry name" value="Clp_ATPase_C"/>
</dbReference>
<dbReference type="InterPro" id="IPR004491">
    <property type="entry name" value="HslU"/>
</dbReference>
<dbReference type="InterPro" id="IPR027417">
    <property type="entry name" value="P-loop_NTPase"/>
</dbReference>
<dbReference type="NCBIfam" id="TIGR00390">
    <property type="entry name" value="hslU"/>
    <property type="match status" value="1"/>
</dbReference>
<dbReference type="NCBIfam" id="NF003544">
    <property type="entry name" value="PRK05201.1"/>
    <property type="match status" value="1"/>
</dbReference>
<dbReference type="PANTHER" id="PTHR48102">
    <property type="entry name" value="ATP-DEPENDENT CLP PROTEASE ATP-BINDING SUBUNIT CLPX-LIKE, MITOCHONDRIAL-RELATED"/>
    <property type="match status" value="1"/>
</dbReference>
<dbReference type="PANTHER" id="PTHR48102:SF3">
    <property type="entry name" value="ATP-DEPENDENT PROTEASE ATPASE SUBUNIT HSLU"/>
    <property type="match status" value="1"/>
</dbReference>
<dbReference type="Pfam" id="PF00004">
    <property type="entry name" value="AAA"/>
    <property type="match status" value="1"/>
</dbReference>
<dbReference type="Pfam" id="PF07724">
    <property type="entry name" value="AAA_2"/>
    <property type="match status" value="1"/>
</dbReference>
<dbReference type="SMART" id="SM00382">
    <property type="entry name" value="AAA"/>
    <property type="match status" value="1"/>
</dbReference>
<dbReference type="SMART" id="SM01086">
    <property type="entry name" value="ClpB_D2-small"/>
    <property type="match status" value="1"/>
</dbReference>
<dbReference type="SUPFAM" id="SSF52540">
    <property type="entry name" value="P-loop containing nucleoside triphosphate hydrolases"/>
    <property type="match status" value="1"/>
</dbReference>
<gene>
    <name evidence="1" type="primary">hslU</name>
    <name type="ordered locus">BURPS1106A_0200</name>
</gene>